<accession>Q9LQ81</accession>
<name>ADF10_ARATH</name>
<organism>
    <name type="scientific">Arabidopsis thaliana</name>
    <name type="common">Mouse-ear cress</name>
    <dbReference type="NCBI Taxonomy" id="3702"/>
    <lineage>
        <taxon>Eukaryota</taxon>
        <taxon>Viridiplantae</taxon>
        <taxon>Streptophyta</taxon>
        <taxon>Embryophyta</taxon>
        <taxon>Tracheophyta</taxon>
        <taxon>Spermatophyta</taxon>
        <taxon>Magnoliopsida</taxon>
        <taxon>eudicotyledons</taxon>
        <taxon>Gunneridae</taxon>
        <taxon>Pentapetalae</taxon>
        <taxon>rosids</taxon>
        <taxon>malvids</taxon>
        <taxon>Brassicales</taxon>
        <taxon>Brassicaceae</taxon>
        <taxon>Camelineae</taxon>
        <taxon>Arabidopsis</taxon>
    </lineage>
</organism>
<reference key="1">
    <citation type="journal article" date="2000" name="Nature">
        <title>Sequence and analysis of chromosome 1 of the plant Arabidopsis thaliana.</title>
        <authorList>
            <person name="Theologis A."/>
            <person name="Ecker J.R."/>
            <person name="Palm C.J."/>
            <person name="Federspiel N.A."/>
            <person name="Kaul S."/>
            <person name="White O."/>
            <person name="Alonso J."/>
            <person name="Altafi H."/>
            <person name="Araujo R."/>
            <person name="Bowman C.L."/>
            <person name="Brooks S.Y."/>
            <person name="Buehler E."/>
            <person name="Chan A."/>
            <person name="Chao Q."/>
            <person name="Chen H."/>
            <person name="Cheuk R.F."/>
            <person name="Chin C.W."/>
            <person name="Chung M.K."/>
            <person name="Conn L."/>
            <person name="Conway A.B."/>
            <person name="Conway A.R."/>
            <person name="Creasy T.H."/>
            <person name="Dewar K."/>
            <person name="Dunn P."/>
            <person name="Etgu P."/>
            <person name="Feldblyum T.V."/>
            <person name="Feng J.-D."/>
            <person name="Fong B."/>
            <person name="Fujii C.Y."/>
            <person name="Gill J.E."/>
            <person name="Goldsmith A.D."/>
            <person name="Haas B."/>
            <person name="Hansen N.F."/>
            <person name="Hughes B."/>
            <person name="Huizar L."/>
            <person name="Hunter J.L."/>
            <person name="Jenkins J."/>
            <person name="Johnson-Hopson C."/>
            <person name="Khan S."/>
            <person name="Khaykin E."/>
            <person name="Kim C.J."/>
            <person name="Koo H.L."/>
            <person name="Kremenetskaia I."/>
            <person name="Kurtz D.B."/>
            <person name="Kwan A."/>
            <person name="Lam B."/>
            <person name="Langin-Hooper S."/>
            <person name="Lee A."/>
            <person name="Lee J.M."/>
            <person name="Lenz C.A."/>
            <person name="Li J.H."/>
            <person name="Li Y.-P."/>
            <person name="Lin X."/>
            <person name="Liu S.X."/>
            <person name="Liu Z.A."/>
            <person name="Luros J.S."/>
            <person name="Maiti R."/>
            <person name="Marziali A."/>
            <person name="Militscher J."/>
            <person name="Miranda M."/>
            <person name="Nguyen M."/>
            <person name="Nierman W.C."/>
            <person name="Osborne B.I."/>
            <person name="Pai G."/>
            <person name="Peterson J."/>
            <person name="Pham P.K."/>
            <person name="Rizzo M."/>
            <person name="Rooney T."/>
            <person name="Rowley D."/>
            <person name="Sakano H."/>
            <person name="Salzberg S.L."/>
            <person name="Schwartz J.R."/>
            <person name="Shinn P."/>
            <person name="Southwick A.M."/>
            <person name="Sun H."/>
            <person name="Tallon L.J."/>
            <person name="Tambunga G."/>
            <person name="Toriumi M.J."/>
            <person name="Town C.D."/>
            <person name="Utterback T."/>
            <person name="Van Aken S."/>
            <person name="Vaysberg M."/>
            <person name="Vysotskaia V.S."/>
            <person name="Walker M."/>
            <person name="Wu D."/>
            <person name="Yu G."/>
            <person name="Fraser C.M."/>
            <person name="Venter J.C."/>
            <person name="Davis R.W."/>
        </authorList>
    </citation>
    <scope>NUCLEOTIDE SEQUENCE [LARGE SCALE GENOMIC DNA]</scope>
    <source>
        <strain>cv. Columbia</strain>
    </source>
</reference>
<reference key="2">
    <citation type="journal article" date="2017" name="Plant J.">
        <title>Araport11: a complete reannotation of the Arabidopsis thaliana reference genome.</title>
        <authorList>
            <person name="Cheng C.Y."/>
            <person name="Krishnakumar V."/>
            <person name="Chan A.P."/>
            <person name="Thibaud-Nissen F."/>
            <person name="Schobel S."/>
            <person name="Town C.D."/>
        </authorList>
    </citation>
    <scope>GENOME REANNOTATION</scope>
    <source>
        <strain>cv. Columbia</strain>
    </source>
</reference>
<reference key="3">
    <citation type="journal article" date="2003" name="Science">
        <title>Empirical analysis of transcriptional activity in the Arabidopsis genome.</title>
        <authorList>
            <person name="Yamada K."/>
            <person name="Lim J."/>
            <person name="Dale J.M."/>
            <person name="Chen H."/>
            <person name="Shinn P."/>
            <person name="Palm C.J."/>
            <person name="Southwick A.M."/>
            <person name="Wu H.C."/>
            <person name="Kim C.J."/>
            <person name="Nguyen M."/>
            <person name="Pham P.K."/>
            <person name="Cheuk R.F."/>
            <person name="Karlin-Newmann G."/>
            <person name="Liu S.X."/>
            <person name="Lam B."/>
            <person name="Sakano H."/>
            <person name="Wu T."/>
            <person name="Yu G."/>
            <person name="Miranda M."/>
            <person name="Quach H.L."/>
            <person name="Tripp M."/>
            <person name="Chang C.H."/>
            <person name="Lee J.M."/>
            <person name="Toriumi M.J."/>
            <person name="Chan M.M."/>
            <person name="Tang C.C."/>
            <person name="Onodera C.S."/>
            <person name="Deng J.M."/>
            <person name="Akiyama K."/>
            <person name="Ansari Y."/>
            <person name="Arakawa T."/>
            <person name="Banh J."/>
            <person name="Banno F."/>
            <person name="Bowser L."/>
            <person name="Brooks S.Y."/>
            <person name="Carninci P."/>
            <person name="Chao Q."/>
            <person name="Choy N."/>
            <person name="Enju A."/>
            <person name="Goldsmith A.D."/>
            <person name="Gurjal M."/>
            <person name="Hansen N.F."/>
            <person name="Hayashizaki Y."/>
            <person name="Johnson-Hopson C."/>
            <person name="Hsuan V.W."/>
            <person name="Iida K."/>
            <person name="Karnes M."/>
            <person name="Khan S."/>
            <person name="Koesema E."/>
            <person name="Ishida J."/>
            <person name="Jiang P.X."/>
            <person name="Jones T."/>
            <person name="Kawai J."/>
            <person name="Kamiya A."/>
            <person name="Meyers C."/>
            <person name="Nakajima M."/>
            <person name="Narusaka M."/>
            <person name="Seki M."/>
            <person name="Sakurai T."/>
            <person name="Satou M."/>
            <person name="Tamse R."/>
            <person name="Vaysberg M."/>
            <person name="Wallender E.K."/>
            <person name="Wong C."/>
            <person name="Yamamura Y."/>
            <person name="Yuan S."/>
            <person name="Shinozaki K."/>
            <person name="Davis R.W."/>
            <person name="Theologis A."/>
            <person name="Ecker J.R."/>
        </authorList>
    </citation>
    <scope>NUCLEOTIDE SEQUENCE [LARGE SCALE MRNA]</scope>
    <source>
        <strain>cv. Columbia</strain>
    </source>
</reference>
<reference key="4">
    <citation type="submission" date="2002-03" db="EMBL/GenBank/DDBJ databases">
        <title>Full-length cDNA from Arabidopsis thaliana.</title>
        <authorList>
            <person name="Brover V.V."/>
            <person name="Troukhan M.E."/>
            <person name="Alexandrov N.A."/>
            <person name="Lu Y.-P."/>
            <person name="Flavell R.B."/>
            <person name="Feldmann K.A."/>
        </authorList>
    </citation>
    <scope>NUCLEOTIDE SEQUENCE [LARGE SCALE MRNA]</scope>
</reference>
<reference key="5">
    <citation type="journal article" date="2006" name="J. Plant Physiol.">
        <title>Comparative study of rice and Arabidopsis actin-depolymerizing factors gene families.</title>
        <authorList>
            <person name="Feng Y."/>
            <person name="Liu Q."/>
            <person name="Xue Q."/>
        </authorList>
    </citation>
    <scope>GENE FAMILY</scope>
</reference>
<feature type="chain" id="PRO_0000214929" description="Actin-depolymerizing factor 10">
    <location>
        <begin position="1"/>
        <end position="140"/>
    </location>
</feature>
<feature type="domain" description="ADF-H" evidence="4">
    <location>
        <begin position="7"/>
        <end position="139"/>
    </location>
</feature>
<feature type="modified residue" description="Phosphoserine" evidence="2">
    <location>
        <position position="6"/>
    </location>
</feature>
<gene>
    <name type="primary">ADF10</name>
    <name type="ordered locus">At1g01750</name>
    <name type="ORF">T1N6.16</name>
</gene>
<dbReference type="EMBL" id="AC009273">
    <property type="protein sequence ID" value="AAF78408.1"/>
    <property type="molecule type" value="Genomic_DNA"/>
</dbReference>
<dbReference type="EMBL" id="CP002684">
    <property type="protein sequence ID" value="AEE27331.1"/>
    <property type="molecule type" value="Genomic_DNA"/>
</dbReference>
<dbReference type="EMBL" id="AY072410">
    <property type="protein sequence ID" value="AAL62402.1"/>
    <property type="molecule type" value="mRNA"/>
</dbReference>
<dbReference type="EMBL" id="BT001250">
    <property type="protein sequence ID" value="AAN65137.1"/>
    <property type="molecule type" value="mRNA"/>
</dbReference>
<dbReference type="EMBL" id="AY088305">
    <property type="protein sequence ID" value="AAM65844.1"/>
    <property type="molecule type" value="mRNA"/>
</dbReference>
<dbReference type="PIR" id="A86149">
    <property type="entry name" value="A86149"/>
</dbReference>
<dbReference type="SMR" id="Q9LQ81"/>
<dbReference type="FunCoup" id="Q9LQ81">
    <property type="interactions" value="2782"/>
</dbReference>
<dbReference type="STRING" id="3702.Q9LQ81"/>
<dbReference type="PaxDb" id="3702-AT1G01750.1"/>
<dbReference type="ProteomicsDB" id="244814"/>
<dbReference type="EnsemblPlants" id="AT1G01750.1">
    <property type="protein sequence ID" value="AT1G01750.1"/>
    <property type="gene ID" value="AT1G01750"/>
</dbReference>
<dbReference type="GeneID" id="839281"/>
<dbReference type="Gramene" id="AT1G01750.1">
    <property type="protein sequence ID" value="AT1G01750.1"/>
    <property type="gene ID" value="AT1G01750"/>
</dbReference>
<dbReference type="KEGG" id="ath:AT1G01750"/>
<dbReference type="Araport" id="AT1G01750"/>
<dbReference type="TAIR" id="AT1G01750">
    <property type="gene designation" value="ADF11"/>
</dbReference>
<dbReference type="eggNOG" id="KOG1735">
    <property type="taxonomic scope" value="Eukaryota"/>
</dbReference>
<dbReference type="HOGENOM" id="CLU_094004_2_2_1"/>
<dbReference type="InParanoid" id="Q9LQ81"/>
<dbReference type="OMA" id="FTACMPA"/>
<dbReference type="OrthoDB" id="10249245at2759"/>
<dbReference type="PhylomeDB" id="Q9LQ81"/>
<dbReference type="PRO" id="PR:Q9LQ81"/>
<dbReference type="Proteomes" id="UP000006548">
    <property type="component" value="Chromosome 1"/>
</dbReference>
<dbReference type="ExpressionAtlas" id="Q9LQ81">
    <property type="expression patterns" value="baseline and differential"/>
</dbReference>
<dbReference type="GO" id="GO:0015629">
    <property type="term" value="C:actin cytoskeleton"/>
    <property type="evidence" value="ECO:0007669"/>
    <property type="project" value="InterPro"/>
</dbReference>
<dbReference type="GO" id="GO:0005737">
    <property type="term" value="C:cytoplasm"/>
    <property type="evidence" value="ECO:0007669"/>
    <property type="project" value="UniProtKB-KW"/>
</dbReference>
<dbReference type="GO" id="GO:0003779">
    <property type="term" value="F:actin binding"/>
    <property type="evidence" value="ECO:0007669"/>
    <property type="project" value="UniProtKB-KW"/>
</dbReference>
<dbReference type="GO" id="GO:0030042">
    <property type="term" value="P:actin filament depolymerization"/>
    <property type="evidence" value="ECO:0000314"/>
    <property type="project" value="TAIR"/>
</dbReference>
<dbReference type="CDD" id="cd11286">
    <property type="entry name" value="ADF_cofilin_like"/>
    <property type="match status" value="1"/>
</dbReference>
<dbReference type="FunFam" id="3.40.20.10:FF:000025">
    <property type="entry name" value="Actin-depolymerizing factor 2"/>
    <property type="match status" value="1"/>
</dbReference>
<dbReference type="Gene3D" id="3.40.20.10">
    <property type="entry name" value="Severin"/>
    <property type="match status" value="1"/>
</dbReference>
<dbReference type="InterPro" id="IPR002108">
    <property type="entry name" value="ADF-H"/>
</dbReference>
<dbReference type="InterPro" id="IPR029006">
    <property type="entry name" value="ADF-H/Gelsolin-like_dom_sf"/>
</dbReference>
<dbReference type="InterPro" id="IPR017904">
    <property type="entry name" value="ADF/Cofilin"/>
</dbReference>
<dbReference type="PANTHER" id="PTHR11913">
    <property type="entry name" value="COFILIN-RELATED"/>
    <property type="match status" value="1"/>
</dbReference>
<dbReference type="Pfam" id="PF00241">
    <property type="entry name" value="Cofilin_ADF"/>
    <property type="match status" value="1"/>
</dbReference>
<dbReference type="SMART" id="SM00102">
    <property type="entry name" value="ADF"/>
    <property type="match status" value="1"/>
</dbReference>
<dbReference type="SUPFAM" id="SSF55753">
    <property type="entry name" value="Actin depolymerizing proteins"/>
    <property type="match status" value="1"/>
</dbReference>
<dbReference type="PROSITE" id="PS51263">
    <property type="entry name" value="ADF_H"/>
    <property type="match status" value="1"/>
</dbReference>
<sequence length="140" mass="16342">MANSASGMHVSDECKLKFLELKAKRNYRFIVFKIDEKAQQVMIDKLGNPEETYEDFTRSIPEDECRYAVYDYDFTTPENCQKSKIFFIAWSPDTSRVRSKMLYASSKDRFKRELDGIQVELQATDPSEMSLDIIKGRVNL</sequence>
<evidence type="ECO:0000250" key="1">
    <source>
        <dbReference type="UniProtKB" id="O49606"/>
    </source>
</evidence>
<evidence type="ECO:0000250" key="2">
    <source>
        <dbReference type="UniProtKB" id="Q39250"/>
    </source>
</evidence>
<evidence type="ECO:0000250" key="3">
    <source>
        <dbReference type="UniProtKB" id="Q39251"/>
    </source>
</evidence>
<evidence type="ECO:0000255" key="4">
    <source>
        <dbReference type="PROSITE-ProRule" id="PRU00599"/>
    </source>
</evidence>
<evidence type="ECO:0000305" key="5"/>
<proteinExistence type="evidence at transcript level"/>
<keyword id="KW-0009">Actin-binding</keyword>
<keyword id="KW-0963">Cytoplasm</keyword>
<keyword id="KW-0206">Cytoskeleton</keyword>
<keyword id="KW-0597">Phosphoprotein</keyword>
<keyword id="KW-1185">Reference proteome</keyword>
<comment type="function">
    <text evidence="3">Actin-depolymerizing protein. Severs actin filaments (F-actin) and binds to actin monomers.</text>
</comment>
<comment type="subcellular location">
    <subcellularLocation>
        <location evidence="1">Cytoplasm</location>
        <location evidence="1">Cytoskeleton</location>
    </subcellularLocation>
</comment>
<comment type="similarity">
    <text evidence="5">Belongs to the actin-binding proteins ADF family.</text>
</comment>
<protein>
    <recommendedName>
        <fullName>Actin-depolymerizing factor 10</fullName>
        <shortName>ADF-10</shortName>
        <shortName>AtADF10</shortName>
    </recommendedName>
</protein>